<keyword id="KW-0067">ATP-binding</keyword>
<keyword id="KW-0963">Cytoplasm</keyword>
<keyword id="KW-0275">Fatty acid biosynthesis</keyword>
<keyword id="KW-0276">Fatty acid metabolism</keyword>
<keyword id="KW-0444">Lipid biosynthesis</keyword>
<keyword id="KW-0443">Lipid metabolism</keyword>
<keyword id="KW-0479">Metal-binding</keyword>
<keyword id="KW-0547">Nucleotide-binding</keyword>
<keyword id="KW-1185">Reference proteome</keyword>
<keyword id="KW-0808">Transferase</keyword>
<keyword id="KW-0862">Zinc</keyword>
<keyword id="KW-0863">Zinc-finger</keyword>
<evidence type="ECO:0000250" key="1"/>
<evidence type="ECO:0000255" key="2"/>
<evidence type="ECO:0000255" key="3">
    <source>
        <dbReference type="PROSITE-ProRule" id="PRU01136"/>
    </source>
</evidence>
<evidence type="ECO:0000255" key="4">
    <source>
        <dbReference type="PROSITE-ProRule" id="PRU01137"/>
    </source>
</evidence>
<evidence type="ECO:0000255" key="5">
    <source>
        <dbReference type="PROSITE-ProRule" id="PRU01138"/>
    </source>
</evidence>
<evidence type="ECO:0000305" key="6"/>
<protein>
    <recommendedName>
        <fullName>Acetyl-coenzyme A carboxylase carboxyl transferase subunits beta/alpha</fullName>
        <shortName>ACCase subunits beta/alpha</shortName>
        <shortName>Acetyl-CoA carboxylase carboxyltransferase subunits beta/alpha</shortName>
        <ecNumber>2.1.3.15</ecNumber>
    </recommendedName>
</protein>
<proteinExistence type="inferred from homology"/>
<name>ACCDA_SACEN</name>
<accession>A4F5Q5</accession>
<feature type="chain" id="PRO_0000359116" description="Acetyl-coenzyme A carboxylase carboxyl transferase subunits beta/alpha">
    <location>
        <begin position="1"/>
        <end position="568"/>
    </location>
</feature>
<feature type="domain" description="CoA carboxyltransferase N-terminal" evidence="3">
    <location>
        <begin position="21"/>
        <end position="290"/>
    </location>
</feature>
<feature type="domain" description="CoA carboxyltransferase C-terminal" evidence="4">
    <location>
        <begin position="286"/>
        <end position="536"/>
    </location>
</feature>
<feature type="zinc finger region" description="C4-type" evidence="2">
    <location>
        <begin position="25"/>
        <end position="47"/>
    </location>
</feature>
<feature type="region of interest" description="Acetyl-coenzyme A carboxylase carboxyl transferase subunit beta" evidence="1">
    <location>
        <begin position="1"/>
        <end position="253"/>
    </location>
</feature>
<feature type="region of interest" description="Carboxyltransferase" evidence="5">
    <location>
        <begin position="21"/>
        <end position="536"/>
    </location>
</feature>
<feature type="region of interest" description="Acetyl-coenzyme A carboxylase carboxyl transferase subunit alpha" evidence="1">
    <location>
        <begin position="254"/>
        <end position="559"/>
    </location>
</feature>
<feature type="binding site" evidence="1">
    <location>
        <position position="25"/>
    </location>
    <ligand>
        <name>Zn(2+)</name>
        <dbReference type="ChEBI" id="CHEBI:29105"/>
    </ligand>
</feature>
<feature type="binding site" evidence="1">
    <location>
        <position position="28"/>
    </location>
    <ligand>
        <name>Zn(2+)</name>
        <dbReference type="ChEBI" id="CHEBI:29105"/>
    </ligand>
</feature>
<feature type="binding site" evidence="1">
    <location>
        <position position="44"/>
    </location>
    <ligand>
        <name>Zn(2+)</name>
        <dbReference type="ChEBI" id="CHEBI:29105"/>
    </ligand>
</feature>
<feature type="binding site" evidence="1">
    <location>
        <position position="47"/>
    </location>
    <ligand>
        <name>Zn(2+)</name>
        <dbReference type="ChEBI" id="CHEBI:29105"/>
    </ligand>
</feature>
<dbReference type="EC" id="2.1.3.15"/>
<dbReference type="EMBL" id="AM420293">
    <property type="protein sequence ID" value="CAL99379.1"/>
    <property type="molecule type" value="Genomic_DNA"/>
</dbReference>
<dbReference type="RefSeq" id="WP_009945664.1">
    <property type="nucleotide sequence ID" value="NC_009142.1"/>
</dbReference>
<dbReference type="SMR" id="A4F5Q5"/>
<dbReference type="STRING" id="405948.SACE_0026"/>
<dbReference type="KEGG" id="sen:SACE_0026"/>
<dbReference type="eggNOG" id="COG0777">
    <property type="taxonomic scope" value="Bacteria"/>
</dbReference>
<dbReference type="eggNOG" id="COG0825">
    <property type="taxonomic scope" value="Bacteria"/>
</dbReference>
<dbReference type="HOGENOM" id="CLU_015486_2_1_11"/>
<dbReference type="OrthoDB" id="9772975at2"/>
<dbReference type="UniPathway" id="UPA00655">
    <property type="reaction ID" value="UER00711"/>
</dbReference>
<dbReference type="Proteomes" id="UP000006728">
    <property type="component" value="Chromosome"/>
</dbReference>
<dbReference type="GO" id="GO:0009317">
    <property type="term" value="C:acetyl-CoA carboxylase complex"/>
    <property type="evidence" value="ECO:0007669"/>
    <property type="project" value="InterPro"/>
</dbReference>
<dbReference type="GO" id="GO:0003989">
    <property type="term" value="F:acetyl-CoA carboxylase activity"/>
    <property type="evidence" value="ECO:0007669"/>
    <property type="project" value="InterPro"/>
</dbReference>
<dbReference type="GO" id="GO:0005524">
    <property type="term" value="F:ATP binding"/>
    <property type="evidence" value="ECO:0007669"/>
    <property type="project" value="UniProtKB-KW"/>
</dbReference>
<dbReference type="GO" id="GO:0016743">
    <property type="term" value="F:carboxyl- or carbamoyltransferase activity"/>
    <property type="evidence" value="ECO:0007669"/>
    <property type="project" value="UniProtKB-UniRule"/>
</dbReference>
<dbReference type="GO" id="GO:0008270">
    <property type="term" value="F:zinc ion binding"/>
    <property type="evidence" value="ECO:0007669"/>
    <property type="project" value="UniProtKB-UniRule"/>
</dbReference>
<dbReference type="GO" id="GO:0006633">
    <property type="term" value="P:fatty acid biosynthetic process"/>
    <property type="evidence" value="ECO:0007669"/>
    <property type="project" value="UniProtKB-KW"/>
</dbReference>
<dbReference type="GO" id="GO:2001295">
    <property type="term" value="P:malonyl-CoA biosynthetic process"/>
    <property type="evidence" value="ECO:0007669"/>
    <property type="project" value="UniProtKB-UniRule"/>
</dbReference>
<dbReference type="Gene3D" id="3.90.226.10">
    <property type="entry name" value="2-enoyl-CoA Hydratase, Chain A, domain 1"/>
    <property type="match status" value="2"/>
</dbReference>
<dbReference type="HAMAP" id="MF_00823">
    <property type="entry name" value="AcetylCoA_CT_alpha"/>
    <property type="match status" value="1"/>
</dbReference>
<dbReference type="HAMAP" id="MF_01395">
    <property type="entry name" value="AcetylCoA_CT_beta"/>
    <property type="match status" value="1"/>
</dbReference>
<dbReference type="InterPro" id="IPR001095">
    <property type="entry name" value="Acetyl_CoA_COase_a_su"/>
</dbReference>
<dbReference type="InterPro" id="IPR000438">
    <property type="entry name" value="Acetyl_CoA_COase_Trfase_b_su"/>
</dbReference>
<dbReference type="InterPro" id="IPR029045">
    <property type="entry name" value="ClpP/crotonase-like_dom_sf"/>
</dbReference>
<dbReference type="InterPro" id="IPR011763">
    <property type="entry name" value="COA_CT_C"/>
</dbReference>
<dbReference type="InterPro" id="IPR011762">
    <property type="entry name" value="COA_CT_N"/>
</dbReference>
<dbReference type="InterPro" id="IPR041010">
    <property type="entry name" value="Znf-ACC"/>
</dbReference>
<dbReference type="NCBIfam" id="TIGR00513">
    <property type="entry name" value="accA"/>
    <property type="match status" value="1"/>
</dbReference>
<dbReference type="NCBIfam" id="NF041504">
    <property type="entry name" value="AccA_sub"/>
    <property type="match status" value="1"/>
</dbReference>
<dbReference type="NCBIfam" id="TIGR00515">
    <property type="entry name" value="accD"/>
    <property type="match status" value="1"/>
</dbReference>
<dbReference type="NCBIfam" id="NF004344">
    <property type="entry name" value="PRK05724.1"/>
    <property type="match status" value="1"/>
</dbReference>
<dbReference type="PANTHER" id="PTHR42853">
    <property type="entry name" value="ACETYL-COENZYME A CARBOXYLASE CARBOXYL TRANSFERASE SUBUNIT ALPHA"/>
    <property type="match status" value="1"/>
</dbReference>
<dbReference type="PANTHER" id="PTHR42853:SF3">
    <property type="entry name" value="ACETYL-COENZYME A CARBOXYLASE CARBOXYL TRANSFERASE SUBUNIT ALPHA, CHLOROPLASTIC"/>
    <property type="match status" value="1"/>
</dbReference>
<dbReference type="Pfam" id="PF03255">
    <property type="entry name" value="ACCA"/>
    <property type="match status" value="1"/>
</dbReference>
<dbReference type="Pfam" id="PF17848">
    <property type="entry name" value="Zn_ribbon_ACC"/>
    <property type="match status" value="1"/>
</dbReference>
<dbReference type="PRINTS" id="PR01069">
    <property type="entry name" value="ACCCTRFRASEA"/>
</dbReference>
<dbReference type="SUPFAM" id="SSF52096">
    <property type="entry name" value="ClpP/crotonase"/>
    <property type="match status" value="2"/>
</dbReference>
<dbReference type="PROSITE" id="PS50989">
    <property type="entry name" value="COA_CT_CTER"/>
    <property type="match status" value="1"/>
</dbReference>
<dbReference type="PROSITE" id="PS50980">
    <property type="entry name" value="COA_CT_NTER"/>
    <property type="match status" value="1"/>
</dbReference>
<comment type="function">
    <text evidence="1">Component of the acetyl coenzyme A carboxylase (ACC) complex. Biotin carboxylase (BC) catalyzes the carboxylation of biotin on its carrier protein (BCCP) and then the CO(2) group is transferred by the transcarboxylase to acetyl-CoA to form malonyl-CoA (By similarity).</text>
</comment>
<comment type="catalytic activity">
    <reaction>
        <text>N(6)-carboxybiotinyl-L-lysyl-[protein] + acetyl-CoA = N(6)-biotinyl-L-lysyl-[protein] + malonyl-CoA</text>
        <dbReference type="Rhea" id="RHEA:54728"/>
        <dbReference type="Rhea" id="RHEA-COMP:10505"/>
        <dbReference type="Rhea" id="RHEA-COMP:10506"/>
        <dbReference type="ChEBI" id="CHEBI:57288"/>
        <dbReference type="ChEBI" id="CHEBI:57384"/>
        <dbReference type="ChEBI" id="CHEBI:83144"/>
        <dbReference type="ChEBI" id="CHEBI:83145"/>
        <dbReference type="EC" id="2.1.3.15"/>
    </reaction>
</comment>
<comment type="cofactor">
    <cofactor evidence="1">
        <name>Zn(2+)</name>
        <dbReference type="ChEBI" id="CHEBI:29105"/>
    </cofactor>
    <text evidence="1">Binds 1 zinc ion per subunit.</text>
</comment>
<comment type="pathway">
    <text>Lipid metabolism; malonyl-CoA biosynthesis; malonyl-CoA from acetyl-CoA: step 1/1.</text>
</comment>
<comment type="subunit">
    <text evidence="1">Acetyl-CoA carboxylase is a heterotetramer composed of biotin carboxyl carrier protein (AccB), biotin carboxylase (AccC) and two subunits of ACCase subunit beta/alpha.</text>
</comment>
<comment type="subcellular location">
    <subcellularLocation>
        <location evidence="1">Cytoplasm</location>
    </subcellularLocation>
</comment>
<comment type="similarity">
    <text evidence="6">In the N-terminal section; belongs to the AccD/PCCB family.</text>
</comment>
<comment type="similarity">
    <text evidence="6">In the C-terminal section; belongs to the AccA family.</text>
</comment>
<sequence>MAEPARTLAQDPRLADADQVRWTRCPNCRSLVYLRRLRRNGHVCPDCAHHMRMGVHDRIESLLDAGSFERFGADVAPVDVLGFTDSRPYTERLAQAQRRSGSNEAVLCGTGTIDGAPLVVAALDFGFLGGSVGGVTGELVARAARTALDRRTPLVLVCASGGARMQEGTISLMQMAKTSQEVARLHEAGVLVVSIGTDPTYGGVTASFGMLGDVVVAEPGARIGFAGPQVIRQTIRQELPAGFQTAEYLRDAGMVDLVVPRHELRAHLARLLRVHSGGTAAPAAERGYRTRPRPAADRDASEVLHAARDIGRPSTSDYCARIFEDFVELHGDRVSGDDPAVVAGIGTLGGRPVVVVGHQKGHETAELVQRNFGMPQPAGYHKARRMMDYAERFGFPLVTFVDTPGAHPGVDAEQRGQGTAIAECISRMARLKVPAVSVVTGEGGSGGALALGVGNRVLVLENAYYSVISPEGCSTILWGTAERTSQAAEQLRITAEDLLRLGVVDGVVDEPAGGAQQDHAAMASRLAAALRASIGELSELDGDALLDQRRRRFDRFGDPDHSDSEVQP</sequence>
<reference key="1">
    <citation type="journal article" date="2007" name="Nat. Biotechnol.">
        <title>Complete genome sequence of the erythromycin-producing bacterium Saccharopolyspora erythraea NRRL23338.</title>
        <authorList>
            <person name="Oliynyk M."/>
            <person name="Samborskyy M."/>
            <person name="Lester J.B."/>
            <person name="Mironenko T."/>
            <person name="Scott N."/>
            <person name="Dickens S."/>
            <person name="Haydock S.F."/>
            <person name="Leadlay P.F."/>
        </authorList>
    </citation>
    <scope>NUCLEOTIDE SEQUENCE [LARGE SCALE GENOMIC DNA]</scope>
    <source>
        <strain>ATCC 11635 / DSM 40517 / JCM 4748 / NBRC 13426 / NCIMB 8594 / NRRL 2338</strain>
    </source>
</reference>
<organism>
    <name type="scientific">Saccharopolyspora erythraea (strain ATCC 11635 / DSM 40517 / JCM 4748 / NBRC 13426 / NCIMB 8594 / NRRL 2338)</name>
    <dbReference type="NCBI Taxonomy" id="405948"/>
    <lineage>
        <taxon>Bacteria</taxon>
        <taxon>Bacillati</taxon>
        <taxon>Actinomycetota</taxon>
        <taxon>Actinomycetes</taxon>
        <taxon>Pseudonocardiales</taxon>
        <taxon>Pseudonocardiaceae</taxon>
        <taxon>Saccharopolyspora</taxon>
    </lineage>
</organism>
<gene>
    <name type="primary">accD</name>
    <name type="synonym">accA</name>
    <name type="synonym">accDA</name>
    <name type="ordered locus">SACE_0026</name>
</gene>